<comment type="function">
    <text evidence="3">Metalloprotease that acts as a negative regulator of the Wnt signaling pathway by mediating the cleavage of the N-terminal residues of a subset of Wnt proteins. Following cleavage, Wnt proteins become oxidized and form large disulfide-bond oligomers, leading to their inactivation. Able to cleave wnt8. Required for head formation.</text>
</comment>
<comment type="cofactor">
    <cofactor evidence="1">
        <name>Mn(2+)</name>
        <dbReference type="ChEBI" id="CHEBI:29035"/>
    </cofactor>
    <cofactor evidence="1">
        <name>Co(2+)</name>
        <dbReference type="ChEBI" id="CHEBI:48828"/>
    </cofactor>
    <text evidence="1">Divalent metal cations. Mn(2+) or Co(2+).</text>
</comment>
<comment type="subcellular location">
    <subcellularLocation>
        <location evidence="1">Cell membrane</location>
        <topology evidence="1">Single-pass type I membrane protein</topology>
    </subcellularLocation>
</comment>
<comment type="miscellaneous">
    <text evidence="5">Was named TIKI in reference to large-headed humanoid in Polynesian mythology.</text>
</comment>
<comment type="similarity">
    <text evidence="4">Belongs to the TIKI family.</text>
</comment>
<proteinExistence type="evidence at transcript level"/>
<keyword id="KW-1003">Cell membrane</keyword>
<keyword id="KW-0325">Glycoprotein</keyword>
<keyword id="KW-0378">Hydrolase</keyword>
<keyword id="KW-0472">Membrane</keyword>
<keyword id="KW-0479">Metal-binding</keyword>
<keyword id="KW-0482">Metalloprotease</keyword>
<keyword id="KW-0645">Protease</keyword>
<keyword id="KW-1185">Reference proteome</keyword>
<keyword id="KW-0732">Signal</keyword>
<keyword id="KW-0812">Transmembrane</keyword>
<keyword id="KW-1133">Transmembrane helix</keyword>
<keyword id="KW-0879">Wnt signaling pathway</keyword>
<sequence>MGKTMWARAVFLCFSVGTLLWQEVLTRRIPVDTGQCGLPKSQEDLNSFLWTVRRHPPAYLFGTIHVPYTRVWDFIPQNSKKAFHDSNSVYFELDLTDPYTISALANCQMLPQGENLQDVLPRDLYRRLKRHLEYVKHMMPHWMTPDQRGKGLYADYLFNAIAGNWERKRPVWVMLMVNSLTEADIRSRGVPVLDLYLAQEADRMKKKTGAVERVEEQCHPLNRLNLSQVLFALNQTLLQHESLRAGSFQAPYTTEDLIKHYNCGDLNAVIFSHDSSQLPNFINVTLPPHEQVTAQEIDIYFRQELIYKRNERMARRVIALLKENKDKSFFFAFGAGHFLGNNTVIDVLRQNGYEVEHTPAGQTFTAAKPKTNPTSDDSMATDSPAMKYFDHVPATASYFGESDEEMLPPHLLLPDSISQLEEFGKQNSWHRKHYRNQRPRQFNDLWVRLDDSTTTLPSNTRNTNGEQSAESLVWLPEQDHHNYLDVKLSHSQSNSSPKCLSASPAFLYTLVTLCLITTMRTRS</sequence>
<accession>P0DJQ9</accession>
<accession>I6TUA9</accession>
<reference key="1">
    <citation type="journal article" date="2012" name="Cell">
        <title>Tiki1 is required for head formation via Wnt cleavage-oxidation and inactivation.</title>
        <authorList>
            <person name="Zhang X."/>
            <person name="Abreu J.G."/>
            <person name="Yokota C."/>
            <person name="Macdonald B.T."/>
            <person name="Singh S."/>
            <person name="Coburn K.L."/>
            <person name="Cheong S.M."/>
            <person name="Zhang M.M."/>
            <person name="Ye Q.Z."/>
            <person name="Hang H.C."/>
            <person name="Steen H."/>
            <person name="He X."/>
        </authorList>
    </citation>
    <scope>NUCLEOTIDE SEQUENCE [MRNA]</scope>
    <scope>FUNCTION</scope>
</reference>
<reference key="2">
    <citation type="journal article" date="2010" name="Science">
        <title>The genome of the Western clawed frog Xenopus tropicalis.</title>
        <authorList>
            <person name="Hellsten U."/>
            <person name="Harland R.M."/>
            <person name="Gilchrist M.J."/>
            <person name="Hendrix D."/>
            <person name="Jurka J."/>
            <person name="Kapitonov V."/>
            <person name="Ovcharenko I."/>
            <person name="Putnam N.H."/>
            <person name="Shu S."/>
            <person name="Taher L."/>
            <person name="Blitz I.L."/>
            <person name="Blumberg B."/>
            <person name="Dichmann D.S."/>
            <person name="Dubchak I."/>
            <person name="Amaya E."/>
            <person name="Detter J.C."/>
            <person name="Fletcher R."/>
            <person name="Gerhard D.S."/>
            <person name="Goodstein D."/>
            <person name="Graves T."/>
            <person name="Grigoriev I.V."/>
            <person name="Grimwood J."/>
            <person name="Kawashima T."/>
            <person name="Lindquist E."/>
            <person name="Lucas S.M."/>
            <person name="Mead P.E."/>
            <person name="Mitros T."/>
            <person name="Ogino H."/>
            <person name="Ohta Y."/>
            <person name="Poliakov A.V."/>
            <person name="Pollet N."/>
            <person name="Robert J."/>
            <person name="Salamov A."/>
            <person name="Sater A.K."/>
            <person name="Schmutz J."/>
            <person name="Terry A."/>
            <person name="Vize P.D."/>
            <person name="Warren W.C."/>
            <person name="Wells D."/>
            <person name="Wills A."/>
            <person name="Wilson R.K."/>
            <person name="Zimmerman L.B."/>
            <person name="Zorn A.M."/>
            <person name="Grainger R."/>
            <person name="Grammer T."/>
            <person name="Khokha M.K."/>
            <person name="Richardson P.M."/>
            <person name="Rokhsar D.S."/>
        </authorList>
    </citation>
    <scope>NUCLEOTIDE SEQUENCE [LARGE SCALE GENOMIC DNA]</scope>
</reference>
<feature type="signal peptide" evidence="2">
    <location>
        <begin position="1"/>
        <end position="26"/>
    </location>
</feature>
<feature type="chain" id="PRO_0000419453" description="Metalloprotease TIKI2">
    <location>
        <begin position="27"/>
        <end position="523"/>
    </location>
</feature>
<feature type="topological domain" description="Extracellular" evidence="2">
    <location>
        <begin position="27"/>
        <end position="499"/>
    </location>
</feature>
<feature type="transmembrane region" description="Helical" evidence="2">
    <location>
        <begin position="500"/>
        <end position="516"/>
    </location>
</feature>
<feature type="topological domain" description="Cytoplasmic" evidence="2">
    <location>
        <begin position="517"/>
        <end position="523"/>
    </location>
</feature>
<feature type="glycosylation site" description="N-linked (GlcNAc...) asparagine" evidence="2">
    <location>
        <position position="225"/>
    </location>
</feature>
<feature type="glycosylation site" description="N-linked (GlcNAc...) asparagine" evidence="2">
    <location>
        <position position="234"/>
    </location>
</feature>
<feature type="glycosylation site" description="N-linked (GlcNAc...) asparagine" evidence="2">
    <location>
        <position position="283"/>
    </location>
</feature>
<feature type="glycosylation site" description="N-linked (GlcNAc...) asparagine" evidence="2">
    <location>
        <position position="341"/>
    </location>
</feature>
<feature type="sequence conflict" description="In Ref. 1; AFN02884." evidence="4" ref="1">
    <original>M</original>
    <variation>T</variation>
    <location>
        <position position="139"/>
    </location>
</feature>
<organism>
    <name type="scientific">Xenopus tropicalis</name>
    <name type="common">Western clawed frog</name>
    <name type="synonym">Silurana tropicalis</name>
    <dbReference type="NCBI Taxonomy" id="8364"/>
    <lineage>
        <taxon>Eukaryota</taxon>
        <taxon>Metazoa</taxon>
        <taxon>Chordata</taxon>
        <taxon>Craniata</taxon>
        <taxon>Vertebrata</taxon>
        <taxon>Euteleostomi</taxon>
        <taxon>Amphibia</taxon>
        <taxon>Batrachia</taxon>
        <taxon>Anura</taxon>
        <taxon>Pipoidea</taxon>
        <taxon>Pipidae</taxon>
        <taxon>Xenopodinae</taxon>
        <taxon>Xenopus</taxon>
        <taxon>Silurana</taxon>
    </lineage>
</organism>
<dbReference type="EC" id="3.4.-.-"/>
<dbReference type="EMBL" id="JQ653418">
    <property type="protein sequence ID" value="AFN02884.1"/>
    <property type="molecule type" value="mRNA"/>
</dbReference>
<dbReference type="RefSeq" id="XP_017949070.1">
    <property type="nucleotide sequence ID" value="XM_018093581.2"/>
</dbReference>
<dbReference type="FunCoup" id="P0DJQ9">
    <property type="interactions" value="106"/>
</dbReference>
<dbReference type="STRING" id="8364.ENSXETP00000012455"/>
<dbReference type="MEROPS" id="G04.002"/>
<dbReference type="GlyCosmos" id="P0DJQ9">
    <property type="glycosylation" value="4 sites, No reported glycans"/>
</dbReference>
<dbReference type="GeneID" id="101734068"/>
<dbReference type="KEGG" id="xtr:101734068"/>
<dbReference type="AGR" id="Xenbase:XB-GENE-6050974"/>
<dbReference type="CTD" id="388630"/>
<dbReference type="Xenbase" id="XB-GENE-6050974">
    <property type="gene designation" value="trabd2b"/>
</dbReference>
<dbReference type="InParanoid" id="P0DJQ9"/>
<dbReference type="OMA" id="WHKKQYK"/>
<dbReference type="OrthoDB" id="10040378at2759"/>
<dbReference type="Proteomes" id="UP000008143">
    <property type="component" value="Chromosome 4"/>
</dbReference>
<dbReference type="Bgee" id="ENSXETG00000035683">
    <property type="expression patterns" value="Expressed in 2-cell stage embryo and 10 other cell types or tissues"/>
</dbReference>
<dbReference type="GO" id="GO:0031090">
    <property type="term" value="C:organelle membrane"/>
    <property type="evidence" value="ECO:0000250"/>
    <property type="project" value="UniProtKB"/>
</dbReference>
<dbReference type="GO" id="GO:0005886">
    <property type="term" value="C:plasma membrane"/>
    <property type="evidence" value="ECO:0000250"/>
    <property type="project" value="UniProtKB"/>
</dbReference>
<dbReference type="GO" id="GO:0046872">
    <property type="term" value="F:metal ion binding"/>
    <property type="evidence" value="ECO:0007669"/>
    <property type="project" value="UniProtKB-KW"/>
</dbReference>
<dbReference type="GO" id="GO:0004222">
    <property type="term" value="F:metalloendopeptidase activity"/>
    <property type="evidence" value="ECO:0000250"/>
    <property type="project" value="UniProtKB"/>
</dbReference>
<dbReference type="GO" id="GO:0017147">
    <property type="term" value="F:Wnt-protein binding"/>
    <property type="evidence" value="ECO:0000250"/>
    <property type="project" value="UniProtKB"/>
</dbReference>
<dbReference type="GO" id="GO:0030178">
    <property type="term" value="P:negative regulation of Wnt signaling pathway"/>
    <property type="evidence" value="ECO:0000250"/>
    <property type="project" value="UniProtKB"/>
</dbReference>
<dbReference type="GO" id="GO:0006508">
    <property type="term" value="P:proteolysis"/>
    <property type="evidence" value="ECO:0007669"/>
    <property type="project" value="UniProtKB-KW"/>
</dbReference>
<dbReference type="GO" id="GO:0016055">
    <property type="term" value="P:Wnt signaling pathway"/>
    <property type="evidence" value="ECO:0007669"/>
    <property type="project" value="UniProtKB-KW"/>
</dbReference>
<dbReference type="CDD" id="cd14789">
    <property type="entry name" value="Tiki"/>
    <property type="match status" value="1"/>
</dbReference>
<dbReference type="InterPro" id="IPR040230">
    <property type="entry name" value="TIKI1/2-like"/>
</dbReference>
<dbReference type="InterPro" id="IPR002816">
    <property type="entry name" value="TraB/PrgY/GumN_fam"/>
</dbReference>
<dbReference type="PANTHER" id="PTHR31120">
    <property type="entry name" value="METALLOPROTEASE TIKI"/>
    <property type="match status" value="1"/>
</dbReference>
<dbReference type="PANTHER" id="PTHR31120:SF8">
    <property type="entry name" value="METALLOPROTEASE TIKI2"/>
    <property type="match status" value="1"/>
</dbReference>
<dbReference type="Pfam" id="PF01963">
    <property type="entry name" value="TraB_PrgY_gumN"/>
    <property type="match status" value="1"/>
</dbReference>
<protein>
    <recommendedName>
        <fullName>Metalloprotease TIKI2</fullName>
        <ecNumber>3.4.-.-</ecNumber>
    </recommendedName>
    <alternativeName>
        <fullName>TRAB domain-containing protein 2B</fullName>
    </alternativeName>
</protein>
<evidence type="ECO:0000250" key="1"/>
<evidence type="ECO:0000255" key="2"/>
<evidence type="ECO:0000269" key="3">
    <source>
    </source>
</evidence>
<evidence type="ECO:0000305" key="4"/>
<evidence type="ECO:0000305" key="5">
    <source>
    </source>
</evidence>
<name>TIKI2_XENTR</name>
<gene>
    <name type="primary">trabd2b</name>
    <name type="synonym">tiki2</name>
</gene>